<comment type="function">
    <text evidence="1">Binds 16S rRNA, required for the assembly of 30S particles and may also be responsible for determining the conformation of the 16S rRNA at the A site.</text>
</comment>
<comment type="subunit">
    <text evidence="1">Part of the 30S ribosomal subunit. Contacts proteins S3 and S10.</text>
</comment>
<comment type="similarity">
    <text evidence="1">Belongs to the universal ribosomal protein uS14 family.</text>
</comment>
<organism>
    <name type="scientific">Leuconostoc citreum (strain KM20)</name>
    <dbReference type="NCBI Taxonomy" id="349519"/>
    <lineage>
        <taxon>Bacteria</taxon>
        <taxon>Bacillati</taxon>
        <taxon>Bacillota</taxon>
        <taxon>Bacilli</taxon>
        <taxon>Lactobacillales</taxon>
        <taxon>Lactobacillaceae</taxon>
        <taxon>Leuconostoc</taxon>
    </lineage>
</organism>
<proteinExistence type="inferred from homology"/>
<keyword id="KW-1185">Reference proteome</keyword>
<keyword id="KW-0687">Ribonucleoprotein</keyword>
<keyword id="KW-0689">Ribosomal protein</keyword>
<keyword id="KW-0694">RNA-binding</keyword>
<keyword id="KW-0699">rRNA-binding</keyword>
<feature type="chain" id="PRO_1000128434" description="Small ribosomal subunit protein uS14">
    <location>
        <begin position="1"/>
        <end position="89"/>
    </location>
</feature>
<gene>
    <name evidence="1" type="primary">rpsN</name>
    <name type="ordered locus">LCK_01103</name>
</gene>
<reference key="1">
    <citation type="journal article" date="2008" name="J. Bacteriol.">
        <title>Complete genome sequence of Leuconostoc citreum KM20.</title>
        <authorList>
            <person name="Kim J.F."/>
            <person name="Jeong H."/>
            <person name="Lee J.-S."/>
            <person name="Choi S.-H."/>
            <person name="Ha M."/>
            <person name="Hur C.-G."/>
            <person name="Kim J.-S."/>
            <person name="Lee S."/>
            <person name="Park H.-S."/>
            <person name="Park Y.-H."/>
            <person name="Oh T.K."/>
        </authorList>
    </citation>
    <scope>NUCLEOTIDE SEQUENCE [LARGE SCALE GENOMIC DNA]</scope>
    <source>
        <strain>KM20</strain>
    </source>
</reference>
<name>RS14_LEUCK</name>
<sequence length="89" mass="9945">MAKKSKIAKAQKREALVAKYADKRAALKAAGDFIGLAALPKDSSPVRMHNRDLIDGRPHAYMREFGMSRLNFRQLAHKGQIPGVRKASW</sequence>
<protein>
    <recommendedName>
        <fullName evidence="1">Small ribosomal subunit protein uS14</fullName>
    </recommendedName>
    <alternativeName>
        <fullName evidence="2">30S ribosomal protein S14</fullName>
    </alternativeName>
</protein>
<evidence type="ECO:0000255" key="1">
    <source>
        <dbReference type="HAMAP-Rule" id="MF_00537"/>
    </source>
</evidence>
<evidence type="ECO:0000305" key="2"/>
<accession>B1MZH8</accession>
<dbReference type="EMBL" id="DQ489736">
    <property type="protein sequence ID" value="ACA82930.1"/>
    <property type="molecule type" value="Genomic_DNA"/>
</dbReference>
<dbReference type="RefSeq" id="WP_004904725.1">
    <property type="nucleotide sequence ID" value="NC_010471.1"/>
</dbReference>
<dbReference type="SMR" id="B1MZH8"/>
<dbReference type="STRING" id="349519.LCK_01103"/>
<dbReference type="GeneID" id="61101877"/>
<dbReference type="KEGG" id="lci:LCK_01103"/>
<dbReference type="eggNOG" id="COG0199">
    <property type="taxonomic scope" value="Bacteria"/>
</dbReference>
<dbReference type="HOGENOM" id="CLU_139869_0_0_9"/>
<dbReference type="OrthoDB" id="9810484at2"/>
<dbReference type="Proteomes" id="UP000002166">
    <property type="component" value="Chromosome"/>
</dbReference>
<dbReference type="GO" id="GO:0005737">
    <property type="term" value="C:cytoplasm"/>
    <property type="evidence" value="ECO:0007669"/>
    <property type="project" value="UniProtKB-ARBA"/>
</dbReference>
<dbReference type="GO" id="GO:0015935">
    <property type="term" value="C:small ribosomal subunit"/>
    <property type="evidence" value="ECO:0007669"/>
    <property type="project" value="TreeGrafter"/>
</dbReference>
<dbReference type="GO" id="GO:0019843">
    <property type="term" value="F:rRNA binding"/>
    <property type="evidence" value="ECO:0007669"/>
    <property type="project" value="UniProtKB-UniRule"/>
</dbReference>
<dbReference type="GO" id="GO:0003735">
    <property type="term" value="F:structural constituent of ribosome"/>
    <property type="evidence" value="ECO:0007669"/>
    <property type="project" value="InterPro"/>
</dbReference>
<dbReference type="GO" id="GO:0006412">
    <property type="term" value="P:translation"/>
    <property type="evidence" value="ECO:0007669"/>
    <property type="project" value="UniProtKB-UniRule"/>
</dbReference>
<dbReference type="Gene3D" id="4.10.830.10">
    <property type="entry name" value="30s Ribosomal Protein S14, Chain N"/>
    <property type="match status" value="1"/>
</dbReference>
<dbReference type="HAMAP" id="MF_00537">
    <property type="entry name" value="Ribosomal_uS14_1"/>
    <property type="match status" value="1"/>
</dbReference>
<dbReference type="InterPro" id="IPR001209">
    <property type="entry name" value="Ribosomal_uS14"/>
</dbReference>
<dbReference type="InterPro" id="IPR023036">
    <property type="entry name" value="Ribosomal_uS14_bac/plastid"/>
</dbReference>
<dbReference type="InterPro" id="IPR043140">
    <property type="entry name" value="Ribosomal_uS14_sf"/>
</dbReference>
<dbReference type="NCBIfam" id="NF006477">
    <property type="entry name" value="PRK08881.1"/>
    <property type="match status" value="1"/>
</dbReference>
<dbReference type="PANTHER" id="PTHR19836">
    <property type="entry name" value="30S RIBOSOMAL PROTEIN S14"/>
    <property type="match status" value="1"/>
</dbReference>
<dbReference type="PANTHER" id="PTHR19836:SF19">
    <property type="entry name" value="SMALL RIBOSOMAL SUBUNIT PROTEIN US14M"/>
    <property type="match status" value="1"/>
</dbReference>
<dbReference type="Pfam" id="PF00253">
    <property type="entry name" value="Ribosomal_S14"/>
    <property type="match status" value="1"/>
</dbReference>
<dbReference type="SUPFAM" id="SSF57716">
    <property type="entry name" value="Glucocorticoid receptor-like (DNA-binding domain)"/>
    <property type="match status" value="1"/>
</dbReference>